<keyword id="KW-0378">Hydrolase</keyword>
<keyword id="KW-0391">Immunity</keyword>
<keyword id="KW-0399">Innate immunity</keyword>
<keyword id="KW-0540">Nuclease</keyword>
<keyword id="KW-0539">Nucleus</keyword>
<keyword id="KW-1185">Reference proteome</keyword>
<keyword id="KW-0694">RNA-binding</keyword>
<proteinExistence type="evidence at transcript level"/>
<sequence length="858" mass="97085">MSTTRPLLGMKRITEVTCTEPPGGRQSPTASRAQPDSLTVDEFTVHEDKQTELKCSKPKVEQVFQVTFTIIGLLDHTGAHGSKASRQIWLQLKGKKEDVYKAKEYVKGLCDPELQKEEWYPVDMHCIFAGARGLFLDRLLRDTSAEVQVLEPGRLKLSGCAEAVVMAQSRVQQFVALFQEKRSLPADREPSVKRKFKTFVEDRADKYAMELLLLPSALKEELLGLAQSPTQPIVIIDLEQDRSQTSTPVTDLSNRILDTTFEDKTSPITPEVMPGLNGRPCNKRRSSESEQRDTKRQYSLERREEEQCEEREREPTKTWTVKSAKGTLAASEMTNESEAVSPETNLRCLVNFFRTMGYQQDVVERVVRETGQTEDTFLLLERIVEETQKTQSTQGAQRTSRTPDPSPCANASSTSTSNRLKEKERVQMRALAEIKCKENIRPPSTNGIGQKNQTSSVPLASATLKRNNGAQTDLCEVIIIDDEEDFTETERKPRLTPLDLKPESRFDYLPRGSSQTMVPVRMETVTNLRSSSQGPPLRTSDTRPGCSYQTLPGRAPLPRSEAQYTSKAAPLTGMSRFQQSLRTPYRLILQNEPGSPNLRHIIIDGSNVAMAHGLHRVFSCRGIAIAVEAFWRRGHREITVFVPQWRQKKDPNITEQHFLNQLENLRLLSFTPSREVCGHRISSHDDRFLLHLAEKTGGVIVTNDNLRDFVSQSEAWRRIIHERLLQFTFVEDHFMIPDDPLGKHGPHLDEFLLKDSRGSPIIPPLRTDLRATPSVYSQAAQSTAHPSSPSHWPHSGPPDWHLPRPSPSPPPQRSPSETTELKRKLYDIFPDQKQRIDRILSDNPYMRDLNALSGLLLG</sequence>
<organism>
    <name type="scientific">Danio rerio</name>
    <name type="common">Zebrafish</name>
    <name type="synonym">Brachydanio rerio</name>
    <dbReference type="NCBI Taxonomy" id="7955"/>
    <lineage>
        <taxon>Eukaryota</taxon>
        <taxon>Metazoa</taxon>
        <taxon>Chordata</taxon>
        <taxon>Craniata</taxon>
        <taxon>Vertebrata</taxon>
        <taxon>Euteleostomi</taxon>
        <taxon>Actinopterygii</taxon>
        <taxon>Neopterygii</taxon>
        <taxon>Teleostei</taxon>
        <taxon>Ostariophysi</taxon>
        <taxon>Cypriniformes</taxon>
        <taxon>Danionidae</taxon>
        <taxon>Danioninae</taxon>
        <taxon>Danio</taxon>
    </lineage>
</organism>
<comment type="function">
    <text evidence="1 2">Potent suppressor of cytokine production that acts as a regulator of innate immune signaling and inflammation. Acts as a key negative regulator of select cytokine and chemokine responses elicited by TRIF-independent Toll-like receptors (TLRs), thereby limiting inflammatory cytokine responses to minor insults (By similarity). Has ribonuclease activity (By similarity).</text>
</comment>
<comment type="subcellular location">
    <subcellularLocation>
        <location evidence="2">Nucleus</location>
    </subcellularLocation>
    <subcellularLocation>
        <location evidence="2">Nucleus</location>
        <location evidence="2">Nucleolus</location>
    </subcellularLocation>
    <subcellularLocation>
        <location evidence="2">Nucleus</location>
        <location evidence="2">PML body</location>
    </subcellularLocation>
    <text evidence="2">Primarily localizes to the nucleolus. Also localizes to the PML nuclear bodies.</text>
</comment>
<comment type="similarity">
    <text evidence="7">Belongs to the N4BP1 family.</text>
</comment>
<comment type="caution">
    <text evidence="7">It is uncertain whether Met-1 or Met-10 is the initiator.</text>
</comment>
<comment type="sequence caution" evidence="7">
    <conflict type="erroneous initiation">
        <sequence resource="EMBL-CDS" id="AAH59205"/>
    </conflict>
    <text>Truncated N-terminus.</text>
</comment>
<reference key="1">
    <citation type="journal article" date="2013" name="Nature">
        <title>The zebrafish reference genome sequence and its relationship to the human genome.</title>
        <authorList>
            <person name="Howe K."/>
            <person name="Clark M.D."/>
            <person name="Torroja C.F."/>
            <person name="Torrance J."/>
            <person name="Berthelot C."/>
            <person name="Muffato M."/>
            <person name="Collins J.E."/>
            <person name="Humphray S."/>
            <person name="McLaren K."/>
            <person name="Matthews L."/>
            <person name="McLaren S."/>
            <person name="Sealy I."/>
            <person name="Caccamo M."/>
            <person name="Churcher C."/>
            <person name="Scott C."/>
            <person name="Barrett J.C."/>
            <person name="Koch R."/>
            <person name="Rauch G.J."/>
            <person name="White S."/>
            <person name="Chow W."/>
            <person name="Kilian B."/>
            <person name="Quintais L.T."/>
            <person name="Guerra-Assuncao J.A."/>
            <person name="Zhou Y."/>
            <person name="Gu Y."/>
            <person name="Yen J."/>
            <person name="Vogel J.H."/>
            <person name="Eyre T."/>
            <person name="Redmond S."/>
            <person name="Banerjee R."/>
            <person name="Chi J."/>
            <person name="Fu B."/>
            <person name="Langley E."/>
            <person name="Maguire S.F."/>
            <person name="Laird G.K."/>
            <person name="Lloyd D."/>
            <person name="Kenyon E."/>
            <person name="Donaldson S."/>
            <person name="Sehra H."/>
            <person name="Almeida-King J."/>
            <person name="Loveland J."/>
            <person name="Trevanion S."/>
            <person name="Jones M."/>
            <person name="Quail M."/>
            <person name="Willey D."/>
            <person name="Hunt A."/>
            <person name="Burton J."/>
            <person name="Sims S."/>
            <person name="McLay K."/>
            <person name="Plumb B."/>
            <person name="Davis J."/>
            <person name="Clee C."/>
            <person name="Oliver K."/>
            <person name="Clark R."/>
            <person name="Riddle C."/>
            <person name="Elliot D."/>
            <person name="Threadgold G."/>
            <person name="Harden G."/>
            <person name="Ware D."/>
            <person name="Begum S."/>
            <person name="Mortimore B."/>
            <person name="Kerry G."/>
            <person name="Heath P."/>
            <person name="Phillimore B."/>
            <person name="Tracey A."/>
            <person name="Corby N."/>
            <person name="Dunn M."/>
            <person name="Johnson C."/>
            <person name="Wood J."/>
            <person name="Clark S."/>
            <person name="Pelan S."/>
            <person name="Griffiths G."/>
            <person name="Smith M."/>
            <person name="Glithero R."/>
            <person name="Howden P."/>
            <person name="Barker N."/>
            <person name="Lloyd C."/>
            <person name="Stevens C."/>
            <person name="Harley J."/>
            <person name="Holt K."/>
            <person name="Panagiotidis G."/>
            <person name="Lovell J."/>
            <person name="Beasley H."/>
            <person name="Henderson C."/>
            <person name="Gordon D."/>
            <person name="Auger K."/>
            <person name="Wright D."/>
            <person name="Collins J."/>
            <person name="Raisen C."/>
            <person name="Dyer L."/>
            <person name="Leung K."/>
            <person name="Robertson L."/>
            <person name="Ambridge K."/>
            <person name="Leongamornlert D."/>
            <person name="McGuire S."/>
            <person name="Gilderthorp R."/>
            <person name="Griffiths C."/>
            <person name="Manthravadi D."/>
            <person name="Nichol S."/>
            <person name="Barker G."/>
            <person name="Whitehead S."/>
            <person name="Kay M."/>
            <person name="Brown J."/>
            <person name="Murnane C."/>
            <person name="Gray E."/>
            <person name="Humphries M."/>
            <person name="Sycamore N."/>
            <person name="Barker D."/>
            <person name="Saunders D."/>
            <person name="Wallis J."/>
            <person name="Babbage A."/>
            <person name="Hammond S."/>
            <person name="Mashreghi-Mohammadi M."/>
            <person name="Barr L."/>
            <person name="Martin S."/>
            <person name="Wray P."/>
            <person name="Ellington A."/>
            <person name="Matthews N."/>
            <person name="Ellwood M."/>
            <person name="Woodmansey R."/>
            <person name="Clark G."/>
            <person name="Cooper J."/>
            <person name="Tromans A."/>
            <person name="Grafham D."/>
            <person name="Skuce C."/>
            <person name="Pandian R."/>
            <person name="Andrews R."/>
            <person name="Harrison E."/>
            <person name="Kimberley A."/>
            <person name="Garnett J."/>
            <person name="Fosker N."/>
            <person name="Hall R."/>
            <person name="Garner P."/>
            <person name="Kelly D."/>
            <person name="Bird C."/>
            <person name="Palmer S."/>
            <person name="Gehring I."/>
            <person name="Berger A."/>
            <person name="Dooley C.M."/>
            <person name="Ersan-Urun Z."/>
            <person name="Eser C."/>
            <person name="Geiger H."/>
            <person name="Geisler M."/>
            <person name="Karotki L."/>
            <person name="Kirn A."/>
            <person name="Konantz J."/>
            <person name="Konantz M."/>
            <person name="Oberlander M."/>
            <person name="Rudolph-Geiger S."/>
            <person name="Teucke M."/>
            <person name="Lanz C."/>
            <person name="Raddatz G."/>
            <person name="Osoegawa K."/>
            <person name="Zhu B."/>
            <person name="Rapp A."/>
            <person name="Widaa S."/>
            <person name="Langford C."/>
            <person name="Yang F."/>
            <person name="Schuster S.C."/>
            <person name="Carter N.P."/>
            <person name="Harrow J."/>
            <person name="Ning Z."/>
            <person name="Herrero J."/>
            <person name="Searle S.M."/>
            <person name="Enright A."/>
            <person name="Geisler R."/>
            <person name="Plasterk R.H."/>
            <person name="Lee C."/>
            <person name="Westerfield M."/>
            <person name="de Jong P.J."/>
            <person name="Zon L.I."/>
            <person name="Postlethwait J.H."/>
            <person name="Nusslein-Volhard C."/>
            <person name="Hubbard T.J."/>
            <person name="Roest Crollius H."/>
            <person name="Rogers J."/>
            <person name="Stemple D.L."/>
        </authorList>
    </citation>
    <scope>NUCLEOTIDE SEQUENCE [LARGE SCALE GENOMIC DNA]</scope>
    <source>
        <strain>Tuebingen</strain>
    </source>
</reference>
<reference key="2">
    <citation type="submission" date="2003-10" db="EMBL/GenBank/DDBJ databases">
        <authorList>
            <consortium name="NIH - Zebrafish Gene Collection (ZGC) project"/>
        </authorList>
    </citation>
    <scope>NUCLEOTIDE SEQUENCE [LARGE SCALE MRNA]</scope>
    <source>
        <strain>AB</strain>
    </source>
</reference>
<protein>
    <recommendedName>
        <fullName evidence="2">NEDD4-binding protein 1</fullName>
        <shortName evidence="2">N4BP1</shortName>
        <ecNumber evidence="1">3.1.-.-</ecNumber>
    </recommendedName>
</protein>
<evidence type="ECO:0000250" key="1">
    <source>
        <dbReference type="UniProtKB" id="O75113"/>
    </source>
</evidence>
<evidence type="ECO:0000250" key="2">
    <source>
        <dbReference type="UniProtKB" id="Q6A037"/>
    </source>
</evidence>
<evidence type="ECO:0000255" key="3"/>
<evidence type="ECO:0000256" key="4">
    <source>
        <dbReference type="SAM" id="MobiDB-lite"/>
    </source>
</evidence>
<evidence type="ECO:0000303" key="5">
    <source>
    </source>
</evidence>
<evidence type="ECO:0000303" key="6">
    <source ref="2"/>
</evidence>
<evidence type="ECO:0000305" key="7"/>
<feature type="chain" id="PRO_0000301987" description="NEDD4-binding protein 1">
    <location>
        <begin position="1"/>
        <end position="858"/>
    </location>
</feature>
<feature type="domain" description="KH-like" evidence="3">
    <location>
        <begin position="96"/>
        <end position="180"/>
    </location>
</feature>
<feature type="domain" description="RNase NYN" evidence="3">
    <location>
        <begin position="598"/>
        <end position="750"/>
    </location>
</feature>
<feature type="region of interest" description="Disordered" evidence="4">
    <location>
        <begin position="17"/>
        <end position="37"/>
    </location>
</feature>
<feature type="region of interest" description="Disordered" evidence="4">
    <location>
        <begin position="262"/>
        <end position="321"/>
    </location>
</feature>
<feature type="region of interest" description="Disordered" evidence="4">
    <location>
        <begin position="388"/>
        <end position="424"/>
    </location>
</feature>
<feature type="region of interest" description="Disordered" evidence="4">
    <location>
        <begin position="774"/>
        <end position="823"/>
    </location>
</feature>
<feature type="region of interest" description="CoCUN" evidence="1">
    <location>
        <begin position="813"/>
        <end position="858"/>
    </location>
</feature>
<feature type="compositionally biased region" description="Polar residues" evidence="4">
    <location>
        <begin position="26"/>
        <end position="37"/>
    </location>
</feature>
<feature type="compositionally biased region" description="Basic and acidic residues" evidence="4">
    <location>
        <begin position="285"/>
        <end position="316"/>
    </location>
</feature>
<feature type="compositionally biased region" description="Polar residues" evidence="4">
    <location>
        <begin position="389"/>
        <end position="418"/>
    </location>
</feature>
<feature type="compositionally biased region" description="Polar residues" evidence="4">
    <location>
        <begin position="774"/>
        <end position="784"/>
    </location>
</feature>
<feature type="compositionally biased region" description="Low complexity" evidence="4">
    <location>
        <begin position="785"/>
        <end position="799"/>
    </location>
</feature>
<feature type="compositionally biased region" description="Pro residues" evidence="4">
    <location>
        <begin position="804"/>
        <end position="813"/>
    </location>
</feature>
<feature type="sequence conflict" description="In Ref. 2; AAH59205." evidence="7" ref="2">
    <original>R</original>
    <variation>P</variation>
    <location>
        <position position="429"/>
    </location>
</feature>
<gene>
    <name evidence="2" type="primary">n4bp1</name>
    <name evidence="5" type="ORF">si:ch211-215n5.3</name>
    <name evidence="6" type="ORF">zgc:66437</name>
</gene>
<accession>Q1LVK9</accession>
<accession>Q6PCR0</accession>
<name>N4BP1_DANRE</name>
<dbReference type="EC" id="3.1.-.-" evidence="1"/>
<dbReference type="EMBL" id="BX649644">
    <property type="protein sequence ID" value="CAK04516.1"/>
    <property type="molecule type" value="Genomic_DNA"/>
</dbReference>
<dbReference type="EMBL" id="BC059205">
    <property type="protein sequence ID" value="AAH59205.1"/>
    <property type="status" value="ALT_INIT"/>
    <property type="molecule type" value="mRNA"/>
</dbReference>
<dbReference type="RefSeq" id="NP_956081.2">
    <property type="nucleotide sequence ID" value="NM_199787.2"/>
</dbReference>
<dbReference type="SMR" id="Q1LVK9"/>
<dbReference type="FunCoup" id="Q1LVK9">
    <property type="interactions" value="1885"/>
</dbReference>
<dbReference type="STRING" id="7955.ENSDARP00000074624"/>
<dbReference type="PaxDb" id="7955-ENSDARP00000074624"/>
<dbReference type="Ensembl" id="ENSDART00000080174">
    <property type="protein sequence ID" value="ENSDARP00000074624"/>
    <property type="gene ID" value="ENSDARG00000057491"/>
</dbReference>
<dbReference type="GeneID" id="327327"/>
<dbReference type="KEGG" id="dre:327327"/>
<dbReference type="AGR" id="ZFIN:ZDB-GENE-030131-5538"/>
<dbReference type="CTD" id="9683"/>
<dbReference type="ZFIN" id="ZDB-GENE-030131-5538">
    <property type="gene designation" value="n4bp1"/>
</dbReference>
<dbReference type="eggNOG" id="KOG3777">
    <property type="taxonomic scope" value="Eukaryota"/>
</dbReference>
<dbReference type="HOGENOM" id="CLU_014137_1_0_1"/>
<dbReference type="InParanoid" id="Q1LVK9"/>
<dbReference type="OMA" id="ICHKRRS"/>
<dbReference type="OrthoDB" id="392925at2759"/>
<dbReference type="Reactome" id="R-DRE-9758274">
    <property type="pathway name" value="Regulation of NF-kappa B signaling"/>
</dbReference>
<dbReference type="PRO" id="PR:Q1LVK9"/>
<dbReference type="Proteomes" id="UP000000437">
    <property type="component" value="Chromosome 18"/>
</dbReference>
<dbReference type="Bgee" id="ENSDARG00000057491">
    <property type="expression patterns" value="Expressed in blastula and 21 other cell types or tissues"/>
</dbReference>
<dbReference type="GO" id="GO:0005829">
    <property type="term" value="C:cytosol"/>
    <property type="evidence" value="ECO:0000250"/>
    <property type="project" value="UniProtKB"/>
</dbReference>
<dbReference type="GO" id="GO:0005730">
    <property type="term" value="C:nucleolus"/>
    <property type="evidence" value="ECO:0000250"/>
    <property type="project" value="UniProtKB"/>
</dbReference>
<dbReference type="GO" id="GO:0005634">
    <property type="term" value="C:nucleus"/>
    <property type="evidence" value="ECO:0000318"/>
    <property type="project" value="GO_Central"/>
</dbReference>
<dbReference type="GO" id="GO:0016605">
    <property type="term" value="C:PML body"/>
    <property type="evidence" value="ECO:0000250"/>
    <property type="project" value="UniProtKB"/>
</dbReference>
<dbReference type="GO" id="GO:0003729">
    <property type="term" value="F:mRNA binding"/>
    <property type="evidence" value="ECO:0000250"/>
    <property type="project" value="UniProtKB"/>
</dbReference>
<dbReference type="GO" id="GO:0004540">
    <property type="term" value="F:RNA nuclease activity"/>
    <property type="evidence" value="ECO:0000250"/>
    <property type="project" value="UniProtKB"/>
</dbReference>
<dbReference type="GO" id="GO:0043130">
    <property type="term" value="F:ubiquitin binding"/>
    <property type="evidence" value="ECO:0000250"/>
    <property type="project" value="UniProtKB"/>
</dbReference>
<dbReference type="GO" id="GO:0045087">
    <property type="term" value="P:innate immune response"/>
    <property type="evidence" value="ECO:0007669"/>
    <property type="project" value="UniProtKB-KW"/>
</dbReference>
<dbReference type="GO" id="GO:0001818">
    <property type="term" value="P:negative regulation of cytokine production"/>
    <property type="evidence" value="ECO:0000250"/>
    <property type="project" value="UniProtKB"/>
</dbReference>
<dbReference type="GO" id="GO:0032435">
    <property type="term" value="P:negative regulation of proteasomal ubiquitin-dependent protein catabolic process"/>
    <property type="evidence" value="ECO:0000250"/>
    <property type="project" value="UniProtKB"/>
</dbReference>
<dbReference type="GO" id="GO:0031397">
    <property type="term" value="P:negative regulation of protein ubiquitination"/>
    <property type="evidence" value="ECO:0000250"/>
    <property type="project" value="UniProtKB"/>
</dbReference>
<dbReference type="GO" id="GO:0045071">
    <property type="term" value="P:negative regulation of viral genome replication"/>
    <property type="evidence" value="ECO:0000250"/>
    <property type="project" value="UniProtKB"/>
</dbReference>
<dbReference type="GO" id="GO:0045088">
    <property type="term" value="P:regulation of innate immune response"/>
    <property type="evidence" value="ECO:0000250"/>
    <property type="project" value="UniProtKB"/>
</dbReference>
<dbReference type="CDD" id="cd22476">
    <property type="entry name" value="KH-I_N4BP1"/>
    <property type="match status" value="1"/>
</dbReference>
<dbReference type="CDD" id="cd09032">
    <property type="entry name" value="KH-I_N4BP1_like_rpt1"/>
    <property type="match status" value="1"/>
</dbReference>
<dbReference type="CDD" id="cd18728">
    <property type="entry name" value="PIN_N4BP1-like"/>
    <property type="match status" value="1"/>
</dbReference>
<dbReference type="FunFam" id="3.40.50.11980:FF:000001">
    <property type="entry name" value="ZC3H12A isoform 1"/>
    <property type="match status" value="1"/>
</dbReference>
<dbReference type="Gene3D" id="3.40.50.11980">
    <property type="match status" value="1"/>
</dbReference>
<dbReference type="InterPro" id="IPR036612">
    <property type="entry name" value="KH_dom_type_1_sf"/>
</dbReference>
<dbReference type="InterPro" id="IPR056629">
    <property type="entry name" value="KH_N4BP1_1st"/>
</dbReference>
<dbReference type="InterPro" id="IPR056630">
    <property type="entry name" value="KH_N4BP1_2nd"/>
</dbReference>
<dbReference type="InterPro" id="IPR021869">
    <property type="entry name" value="RNase_Zc3h12_NYN"/>
</dbReference>
<dbReference type="InterPro" id="IPR056631">
    <property type="entry name" value="UBA_N4BP1"/>
</dbReference>
<dbReference type="InterPro" id="IPR056578">
    <property type="entry name" value="UBA_N4BP1_C"/>
</dbReference>
<dbReference type="InterPro" id="IPR051101">
    <property type="entry name" value="ZC3H12/N4BP1_RNase_Reg"/>
</dbReference>
<dbReference type="PANTHER" id="PTHR12876">
    <property type="entry name" value="N4BP1-RELATED"/>
    <property type="match status" value="1"/>
</dbReference>
<dbReference type="PANTHER" id="PTHR12876:SF26">
    <property type="entry name" value="NEDD4-BINDING PROTEIN 1"/>
    <property type="match status" value="1"/>
</dbReference>
<dbReference type="Pfam" id="PF23050">
    <property type="entry name" value="KH_N4BP1_1st"/>
    <property type="match status" value="1"/>
</dbReference>
<dbReference type="Pfam" id="PF23052">
    <property type="entry name" value="KH_N4BP1_2nd"/>
    <property type="match status" value="1"/>
</dbReference>
<dbReference type="Pfam" id="PF11977">
    <property type="entry name" value="RNase_Zc3h12a"/>
    <property type="match status" value="1"/>
</dbReference>
<dbReference type="Pfam" id="PF23053">
    <property type="entry name" value="UBA_N4BP1"/>
    <property type="match status" value="1"/>
</dbReference>
<dbReference type="Pfam" id="PF23054">
    <property type="entry name" value="UBA_N4BP1_C"/>
    <property type="match status" value="1"/>
</dbReference>
<dbReference type="SUPFAM" id="SSF54791">
    <property type="entry name" value="Eukaryotic type KH-domain (KH-domain type I)"/>
    <property type="match status" value="1"/>
</dbReference>